<accession>D4Z694</accession>
<sequence>MQIHPLITDSKTLAQFCARIAKSPYIAVDTEFMRENSYWPDLCLVQVADEHEAAAIDPKAPGLDLSPLLDLMVDNEDVLKVFHAGGQDLEIIYNLTGKTPHPLFDTQIAAMALGLGEQIGYGNLVDAWLGVQLDKGARFTDWARRPLDKRQIDYAIGDVTYLIQIFPKMLEELRRTGRGDWLDQEMERISDPSNYENKPEEAWQRVRIASRKADVLGRLKALAAWREMEAQDKNLPRGRIVKDETLADIASHPPRTQEDLGKVRGLSATWKTNDIGNRLMLALASHAPLAKEEMPERDPKRPGLGKDGALVADLLKLLLKIRSRDINVAARLIARSDDIDALAAGVREDLAILEGWRYEQFGRDAVDLVEGRLAFAVKNGRLKMTRTQ</sequence>
<protein>
    <recommendedName>
        <fullName evidence="1">Ribonuclease D</fullName>
        <shortName evidence="1">RNase D</shortName>
        <ecNumber evidence="1">3.1.13.5</ecNumber>
    </recommendedName>
</protein>
<feature type="chain" id="PRO_0000411073" description="Ribonuclease D">
    <location>
        <begin position="1"/>
        <end position="388"/>
    </location>
</feature>
<feature type="domain" description="3'-5' exonuclease" evidence="1">
    <location>
        <begin position="7"/>
        <end position="173"/>
    </location>
</feature>
<feature type="domain" description="HRDC" evidence="1">
    <location>
        <begin position="212"/>
        <end position="293"/>
    </location>
</feature>
<organism>
    <name type="scientific">Sphingobium indicum (strain DSM 16413 / CCM 7287 / MTCC 6362 / UT26 / NBRC 101211 / UT26S)</name>
    <name type="common">Sphingobium japonicum</name>
    <dbReference type="NCBI Taxonomy" id="452662"/>
    <lineage>
        <taxon>Bacteria</taxon>
        <taxon>Pseudomonadati</taxon>
        <taxon>Pseudomonadota</taxon>
        <taxon>Alphaproteobacteria</taxon>
        <taxon>Sphingomonadales</taxon>
        <taxon>Sphingomonadaceae</taxon>
        <taxon>Sphingobium</taxon>
    </lineage>
</organism>
<reference key="1">
    <citation type="journal article" date="2010" name="J. Bacteriol.">
        <title>Complete genome sequence of the representative gamma-hexachlorocyclohexane-degrading bacterium Sphingobium japonicum UT26.</title>
        <authorList>
            <person name="Nagata Y."/>
            <person name="Ohtsubo Y."/>
            <person name="Endo R."/>
            <person name="Ichikawa N."/>
            <person name="Ankai A."/>
            <person name="Oguchi A."/>
            <person name="Fukui S."/>
            <person name="Fujita N."/>
            <person name="Tsuda M."/>
        </authorList>
    </citation>
    <scope>NUCLEOTIDE SEQUENCE [LARGE SCALE GENOMIC DNA]</scope>
    <source>
        <strain>DSM 16413 / CCM 7287 / MTCC 6362 / UT26 / NBRC 101211 / UT26S</strain>
    </source>
</reference>
<proteinExistence type="inferred from homology"/>
<name>RND_SPHIU</name>
<gene>
    <name evidence="1" type="primary">rnd</name>
    <name type="ordered locus">SJA_C1-32920</name>
</gene>
<dbReference type="EC" id="3.1.13.5" evidence="1"/>
<dbReference type="EMBL" id="AP010803">
    <property type="protein sequence ID" value="BAI98126.1"/>
    <property type="status" value="ALT_INIT"/>
    <property type="molecule type" value="Genomic_DNA"/>
</dbReference>
<dbReference type="RefSeq" id="WP_041386633.1">
    <property type="nucleotide sequence ID" value="NC_014006.1"/>
</dbReference>
<dbReference type="SMR" id="D4Z694"/>
<dbReference type="STRING" id="452662.SJA_C1-32920"/>
<dbReference type="GeneID" id="29274786"/>
<dbReference type="KEGG" id="sjp:SJA_C1-32920"/>
<dbReference type="eggNOG" id="COG0349">
    <property type="taxonomic scope" value="Bacteria"/>
</dbReference>
<dbReference type="HOGENOM" id="CLU_042387_0_0_5"/>
<dbReference type="Proteomes" id="UP000007753">
    <property type="component" value="Chromosome 1"/>
</dbReference>
<dbReference type="GO" id="GO:0005737">
    <property type="term" value="C:cytoplasm"/>
    <property type="evidence" value="ECO:0007669"/>
    <property type="project" value="UniProtKB-SubCell"/>
</dbReference>
<dbReference type="GO" id="GO:0008408">
    <property type="term" value="F:3'-5' exonuclease activity"/>
    <property type="evidence" value="ECO:0007669"/>
    <property type="project" value="InterPro"/>
</dbReference>
<dbReference type="GO" id="GO:0003676">
    <property type="term" value="F:nucleic acid binding"/>
    <property type="evidence" value="ECO:0007669"/>
    <property type="project" value="InterPro"/>
</dbReference>
<dbReference type="GO" id="GO:0000166">
    <property type="term" value="F:nucleotide binding"/>
    <property type="evidence" value="ECO:0007669"/>
    <property type="project" value="InterPro"/>
</dbReference>
<dbReference type="GO" id="GO:0033890">
    <property type="term" value="F:ribonuclease D activity"/>
    <property type="evidence" value="ECO:0007669"/>
    <property type="project" value="UniProtKB-UniRule"/>
</dbReference>
<dbReference type="GO" id="GO:0042780">
    <property type="term" value="P:tRNA 3'-end processing"/>
    <property type="evidence" value="ECO:0007669"/>
    <property type="project" value="UniProtKB-UniRule"/>
</dbReference>
<dbReference type="CDD" id="cd06142">
    <property type="entry name" value="RNaseD_exo"/>
    <property type="match status" value="1"/>
</dbReference>
<dbReference type="Gene3D" id="1.10.150.80">
    <property type="entry name" value="HRDC domain"/>
    <property type="match status" value="1"/>
</dbReference>
<dbReference type="Gene3D" id="3.30.420.10">
    <property type="entry name" value="Ribonuclease H-like superfamily/Ribonuclease H"/>
    <property type="match status" value="1"/>
</dbReference>
<dbReference type="HAMAP" id="MF_01899">
    <property type="entry name" value="RNase_D"/>
    <property type="match status" value="1"/>
</dbReference>
<dbReference type="InterPro" id="IPR002562">
    <property type="entry name" value="3'-5'_exonuclease_dom"/>
</dbReference>
<dbReference type="InterPro" id="IPR010997">
    <property type="entry name" value="HRDC-like_sf"/>
</dbReference>
<dbReference type="InterPro" id="IPR002121">
    <property type="entry name" value="HRDC_dom"/>
</dbReference>
<dbReference type="InterPro" id="IPR044876">
    <property type="entry name" value="HRDC_dom_sf"/>
</dbReference>
<dbReference type="InterPro" id="IPR006292">
    <property type="entry name" value="RNase_D"/>
</dbReference>
<dbReference type="InterPro" id="IPR051086">
    <property type="entry name" value="RNase_D-like"/>
</dbReference>
<dbReference type="InterPro" id="IPR012337">
    <property type="entry name" value="RNaseH-like_sf"/>
</dbReference>
<dbReference type="InterPro" id="IPR036397">
    <property type="entry name" value="RNaseH_sf"/>
</dbReference>
<dbReference type="NCBIfam" id="TIGR01388">
    <property type="entry name" value="rnd"/>
    <property type="match status" value="1"/>
</dbReference>
<dbReference type="PANTHER" id="PTHR47649">
    <property type="entry name" value="RIBONUCLEASE D"/>
    <property type="match status" value="1"/>
</dbReference>
<dbReference type="PANTHER" id="PTHR47649:SF1">
    <property type="entry name" value="RIBONUCLEASE D"/>
    <property type="match status" value="1"/>
</dbReference>
<dbReference type="Pfam" id="PF01612">
    <property type="entry name" value="DNA_pol_A_exo1"/>
    <property type="match status" value="1"/>
</dbReference>
<dbReference type="Pfam" id="PF00570">
    <property type="entry name" value="HRDC"/>
    <property type="match status" value="1"/>
</dbReference>
<dbReference type="SMART" id="SM00474">
    <property type="entry name" value="35EXOc"/>
    <property type="match status" value="1"/>
</dbReference>
<dbReference type="SUPFAM" id="SSF47819">
    <property type="entry name" value="HRDC-like"/>
    <property type="match status" value="2"/>
</dbReference>
<dbReference type="SUPFAM" id="SSF53098">
    <property type="entry name" value="Ribonuclease H-like"/>
    <property type="match status" value="1"/>
</dbReference>
<dbReference type="PROSITE" id="PS50967">
    <property type="entry name" value="HRDC"/>
    <property type="match status" value="1"/>
</dbReference>
<evidence type="ECO:0000255" key="1">
    <source>
        <dbReference type="HAMAP-Rule" id="MF_01899"/>
    </source>
</evidence>
<evidence type="ECO:0000305" key="2"/>
<comment type="function">
    <text evidence="1">Exonuclease involved in the 3' processing of various precursor tRNAs. Initiates hydrolysis at the 3'-terminus of an RNA molecule and releases 5'-mononucleotides.</text>
</comment>
<comment type="catalytic activity">
    <reaction evidence="1">
        <text>Exonucleolytic cleavage that removes extra residues from the 3'-terminus of tRNA to produce 5'-mononucleotides.</text>
        <dbReference type="EC" id="3.1.13.5"/>
    </reaction>
</comment>
<comment type="cofactor">
    <cofactor evidence="1">
        <name>a divalent metal cation</name>
        <dbReference type="ChEBI" id="CHEBI:60240"/>
    </cofactor>
</comment>
<comment type="subcellular location">
    <subcellularLocation>
        <location evidence="1">Cytoplasm</location>
    </subcellularLocation>
</comment>
<comment type="similarity">
    <text evidence="1">Belongs to the RNase D family.</text>
</comment>
<comment type="sequence caution" evidence="2">
    <conflict type="erroneous initiation">
        <sequence resource="EMBL-CDS" id="BAI98126"/>
    </conflict>
    <text>Extended N-terminus.</text>
</comment>
<keyword id="KW-0963">Cytoplasm</keyword>
<keyword id="KW-0269">Exonuclease</keyword>
<keyword id="KW-0378">Hydrolase</keyword>
<keyword id="KW-0540">Nuclease</keyword>
<keyword id="KW-1185">Reference proteome</keyword>
<keyword id="KW-0819">tRNA processing</keyword>